<name>CH15_DROSU</name>
<keyword id="KW-0964">Secreted</keyword>
<keyword id="KW-0732">Signal</keyword>
<protein>
    <recommendedName>
        <fullName>Chorion protein S15</fullName>
    </recommendedName>
</protein>
<comment type="function">
    <text evidence="1">Chorion membrane (egg shell) protein; plays a role in protecting the egg from the environment.</text>
</comment>
<comment type="subcellular location">
    <subcellularLocation>
        <location evidence="1">Secreted</location>
    </subcellularLocation>
</comment>
<comment type="similarity">
    <text evidence="3">Belongs to the chorion protein S15/S18 family.</text>
</comment>
<sequence>MKYLFVCVSLALFAYISANPAYGGNRGGYGGGYGNDRVEYEQILVPSYGRSRGGYGGYDRPQILRSAPSGSRASAAAASAAAAIAPGSYSQYAIPRYEIDGSYNGPSHGHGGYGHGGRGGY</sequence>
<gene>
    <name type="primary">Cp15</name>
    <name type="synonym">S15</name>
</gene>
<evidence type="ECO:0000250" key="1"/>
<evidence type="ECO:0000255" key="2"/>
<evidence type="ECO:0000305" key="3"/>
<reference key="1">
    <citation type="journal article" date="1988" name="Genetics">
        <title>Evolution of the autosomal chorion locus in Drosophila. I. General organization of the locus and sequence comparisons of genes s15 and s19 in evolutionary distant species.</title>
        <authorList>
            <person name="Martinez-Cruzado J.C."/>
            <person name="Swimmer C."/>
            <person name="Fenerjian M.G."/>
            <person name="Kafatos F.C."/>
        </authorList>
    </citation>
    <scope>NUCLEOTIDE SEQUENCE [GENOMIC DNA]</scope>
</reference>
<feature type="signal peptide" evidence="2">
    <location>
        <begin position="1"/>
        <end position="18"/>
    </location>
</feature>
<feature type="chain" id="PRO_0000089614" description="Chorion protein S15">
    <location>
        <begin position="19"/>
        <end position="121"/>
    </location>
</feature>
<dbReference type="EMBL" id="X53423">
    <property type="protein sequence ID" value="CAA37509.1"/>
    <property type="molecule type" value="Genomic_DNA"/>
</dbReference>
<dbReference type="PIR" id="S06615">
    <property type="entry name" value="S06615"/>
</dbReference>
<dbReference type="GO" id="GO:0042600">
    <property type="term" value="C:egg chorion"/>
    <property type="evidence" value="ECO:0007669"/>
    <property type="project" value="InterPro"/>
</dbReference>
<dbReference type="GO" id="GO:0005576">
    <property type="term" value="C:extracellular region"/>
    <property type="evidence" value="ECO:0007669"/>
    <property type="project" value="UniProtKB-SubCell"/>
</dbReference>
<dbReference type="InterPro" id="IPR005649">
    <property type="entry name" value="Chorion_2"/>
</dbReference>
<dbReference type="Pfam" id="PF03964">
    <property type="entry name" value="Chorion_2"/>
    <property type="match status" value="2"/>
</dbReference>
<organism>
    <name type="scientific">Drosophila subobscura</name>
    <name type="common">Fruit fly</name>
    <dbReference type="NCBI Taxonomy" id="7241"/>
    <lineage>
        <taxon>Eukaryota</taxon>
        <taxon>Metazoa</taxon>
        <taxon>Ecdysozoa</taxon>
        <taxon>Arthropoda</taxon>
        <taxon>Hexapoda</taxon>
        <taxon>Insecta</taxon>
        <taxon>Pterygota</taxon>
        <taxon>Neoptera</taxon>
        <taxon>Endopterygota</taxon>
        <taxon>Diptera</taxon>
        <taxon>Brachycera</taxon>
        <taxon>Muscomorpha</taxon>
        <taxon>Ephydroidea</taxon>
        <taxon>Drosophilidae</taxon>
        <taxon>Drosophila</taxon>
        <taxon>Sophophora</taxon>
    </lineage>
</organism>
<accession>P13426</accession>
<proteinExistence type="inferred from homology"/>